<proteinExistence type="evidence at protein level"/>
<feature type="chain" id="PRO_1000005065" description="Large ribosomal subunit protein bL32">
    <location>
        <begin position="1"/>
        <end position="57"/>
    </location>
</feature>
<feature type="region of interest" description="Disordered" evidence="2">
    <location>
        <begin position="1"/>
        <end position="22"/>
    </location>
</feature>
<feature type="compositionally biased region" description="Basic residues" evidence="2">
    <location>
        <begin position="1"/>
        <end position="19"/>
    </location>
</feature>
<feature type="helix" evidence="4">
    <location>
        <begin position="10"/>
        <end position="17"/>
    </location>
</feature>
<feature type="strand" evidence="4">
    <location>
        <begin position="33"/>
        <end position="35"/>
    </location>
</feature>
<feature type="turn" evidence="4">
    <location>
        <begin position="41"/>
        <end position="43"/>
    </location>
</feature>
<feature type="helix" evidence="4">
    <location>
        <begin position="44"/>
        <end position="49"/>
    </location>
</feature>
<protein>
    <recommendedName>
        <fullName evidence="1">Large ribosomal subunit protein bL32</fullName>
    </recommendedName>
    <alternativeName>
        <fullName evidence="3">50S ribosomal protein L32</fullName>
    </alternativeName>
</protein>
<reference key="1">
    <citation type="journal article" date="2008" name="PLoS ONE">
        <title>Genetic basis of virulence attenuation revealed by comparative genomic analysis of Mycobacterium tuberculosis strain H37Ra versus H37Rv.</title>
        <authorList>
            <person name="Zheng H."/>
            <person name="Lu L."/>
            <person name="Wang B."/>
            <person name="Pu S."/>
            <person name="Zhang X."/>
            <person name="Zhu G."/>
            <person name="Shi W."/>
            <person name="Zhang L."/>
            <person name="Wang H."/>
            <person name="Wang S."/>
            <person name="Zhao G."/>
            <person name="Zhang Y."/>
        </authorList>
    </citation>
    <scope>NUCLEOTIDE SEQUENCE [LARGE SCALE GENOMIC DNA]</scope>
    <source>
        <strain>ATCC 25177 / H37Ra</strain>
    </source>
</reference>
<organism>
    <name type="scientific">Mycobacterium tuberculosis (strain ATCC 25177 / H37Ra)</name>
    <dbReference type="NCBI Taxonomy" id="419947"/>
    <lineage>
        <taxon>Bacteria</taxon>
        <taxon>Bacillati</taxon>
        <taxon>Actinomycetota</taxon>
        <taxon>Actinomycetes</taxon>
        <taxon>Mycobacteriales</taxon>
        <taxon>Mycobacteriaceae</taxon>
        <taxon>Mycobacterium</taxon>
        <taxon>Mycobacterium tuberculosis complex</taxon>
    </lineage>
</organism>
<sequence length="57" mass="6507">MAVPKRRKSRSNTRSRRSQWKAAKTELVGVTVAGHAHKVPRRLLKAARLGLIDFDKR</sequence>
<gene>
    <name evidence="1" type="primary">rpmF</name>
    <name type="ordered locus">MRA_0986</name>
</gene>
<name>RL32_MYCTA</name>
<dbReference type="EMBL" id="CP000611">
    <property type="protein sequence ID" value="ABQ72721.1"/>
    <property type="molecule type" value="Genomic_DNA"/>
</dbReference>
<dbReference type="RefSeq" id="WP_003405053.1">
    <property type="nucleotide sequence ID" value="NZ_CP016972.1"/>
</dbReference>
<dbReference type="PDB" id="7F0D">
    <property type="method" value="EM"/>
    <property type="resolution" value="3.30 A"/>
    <property type="chains" value="0=1-57"/>
</dbReference>
<dbReference type="PDBsum" id="7F0D"/>
<dbReference type="SMR" id="A5U121"/>
<dbReference type="GeneID" id="45424948"/>
<dbReference type="KEGG" id="mra:MRA_0986"/>
<dbReference type="eggNOG" id="ENOG5033AVR">
    <property type="taxonomic scope" value="Bacteria"/>
</dbReference>
<dbReference type="HOGENOM" id="CLU_203263_0_0_11"/>
<dbReference type="Proteomes" id="UP000001988">
    <property type="component" value="Chromosome"/>
</dbReference>
<dbReference type="GO" id="GO:0015934">
    <property type="term" value="C:large ribosomal subunit"/>
    <property type="evidence" value="ECO:0007669"/>
    <property type="project" value="InterPro"/>
</dbReference>
<dbReference type="GO" id="GO:0003735">
    <property type="term" value="F:structural constituent of ribosome"/>
    <property type="evidence" value="ECO:0007669"/>
    <property type="project" value="InterPro"/>
</dbReference>
<dbReference type="GO" id="GO:0006412">
    <property type="term" value="P:translation"/>
    <property type="evidence" value="ECO:0007669"/>
    <property type="project" value="UniProtKB-UniRule"/>
</dbReference>
<dbReference type="HAMAP" id="MF_00340">
    <property type="entry name" value="Ribosomal_bL32"/>
    <property type="match status" value="1"/>
</dbReference>
<dbReference type="InterPro" id="IPR002677">
    <property type="entry name" value="Ribosomal_bL32"/>
</dbReference>
<dbReference type="InterPro" id="IPR011332">
    <property type="entry name" value="Ribosomal_zn-bd"/>
</dbReference>
<dbReference type="NCBIfam" id="TIGR01031">
    <property type="entry name" value="rpmF_bact"/>
    <property type="match status" value="1"/>
</dbReference>
<dbReference type="Pfam" id="PF01783">
    <property type="entry name" value="Ribosomal_L32p"/>
    <property type="match status" value="1"/>
</dbReference>
<dbReference type="SUPFAM" id="SSF57829">
    <property type="entry name" value="Zn-binding ribosomal proteins"/>
    <property type="match status" value="1"/>
</dbReference>
<accession>A5U121</accession>
<keyword id="KW-0002">3D-structure</keyword>
<keyword id="KW-1185">Reference proteome</keyword>
<keyword id="KW-0687">Ribonucleoprotein</keyword>
<keyword id="KW-0689">Ribosomal protein</keyword>
<evidence type="ECO:0000255" key="1">
    <source>
        <dbReference type="HAMAP-Rule" id="MF_00340"/>
    </source>
</evidence>
<evidence type="ECO:0000256" key="2">
    <source>
        <dbReference type="SAM" id="MobiDB-lite"/>
    </source>
</evidence>
<evidence type="ECO:0000305" key="3"/>
<evidence type="ECO:0007829" key="4">
    <source>
        <dbReference type="PDB" id="7F0D"/>
    </source>
</evidence>
<comment type="similarity">
    <text evidence="1">Belongs to the bacterial ribosomal protein bL32 family.</text>
</comment>